<organism>
    <name type="scientific">Deinococcus geothermalis (strain DSM 11300 / CIP 105573 / AG-3a)</name>
    <dbReference type="NCBI Taxonomy" id="319795"/>
    <lineage>
        <taxon>Bacteria</taxon>
        <taxon>Thermotogati</taxon>
        <taxon>Deinococcota</taxon>
        <taxon>Deinococci</taxon>
        <taxon>Deinococcales</taxon>
        <taxon>Deinococcaceae</taxon>
        <taxon>Deinococcus</taxon>
    </lineage>
</organism>
<dbReference type="EMBL" id="CP000359">
    <property type="protein sequence ID" value="ABF45780.1"/>
    <property type="molecule type" value="Genomic_DNA"/>
</dbReference>
<dbReference type="RefSeq" id="WP_011530614.1">
    <property type="nucleotide sequence ID" value="NC_008025.1"/>
</dbReference>
<dbReference type="SMR" id="Q1IYA4"/>
<dbReference type="STRING" id="319795.Dgeo_1485"/>
<dbReference type="KEGG" id="dge:Dgeo_1485"/>
<dbReference type="eggNOG" id="COG0806">
    <property type="taxonomic scope" value="Bacteria"/>
</dbReference>
<dbReference type="HOGENOM" id="CLU_077636_0_1_0"/>
<dbReference type="Proteomes" id="UP000002431">
    <property type="component" value="Chromosome"/>
</dbReference>
<dbReference type="GO" id="GO:0005737">
    <property type="term" value="C:cytoplasm"/>
    <property type="evidence" value="ECO:0007669"/>
    <property type="project" value="UniProtKB-SubCell"/>
</dbReference>
<dbReference type="GO" id="GO:0005840">
    <property type="term" value="C:ribosome"/>
    <property type="evidence" value="ECO:0007669"/>
    <property type="project" value="InterPro"/>
</dbReference>
<dbReference type="GO" id="GO:0043022">
    <property type="term" value="F:ribosome binding"/>
    <property type="evidence" value="ECO:0007669"/>
    <property type="project" value="InterPro"/>
</dbReference>
<dbReference type="GO" id="GO:0042274">
    <property type="term" value="P:ribosomal small subunit biogenesis"/>
    <property type="evidence" value="ECO:0007669"/>
    <property type="project" value="UniProtKB-UniRule"/>
</dbReference>
<dbReference type="GO" id="GO:0006364">
    <property type="term" value="P:rRNA processing"/>
    <property type="evidence" value="ECO:0007669"/>
    <property type="project" value="UniProtKB-UniRule"/>
</dbReference>
<dbReference type="Gene3D" id="2.30.30.240">
    <property type="entry name" value="PRC-barrel domain"/>
    <property type="match status" value="1"/>
</dbReference>
<dbReference type="Gene3D" id="2.40.30.60">
    <property type="entry name" value="RimM"/>
    <property type="match status" value="1"/>
</dbReference>
<dbReference type="HAMAP" id="MF_00014">
    <property type="entry name" value="Ribosome_mat_RimM"/>
    <property type="match status" value="1"/>
</dbReference>
<dbReference type="InterPro" id="IPR027275">
    <property type="entry name" value="PRC-brl_dom"/>
</dbReference>
<dbReference type="InterPro" id="IPR011033">
    <property type="entry name" value="PRC_barrel-like_sf"/>
</dbReference>
<dbReference type="InterPro" id="IPR011961">
    <property type="entry name" value="RimM"/>
</dbReference>
<dbReference type="InterPro" id="IPR002676">
    <property type="entry name" value="RimM_N"/>
</dbReference>
<dbReference type="InterPro" id="IPR036976">
    <property type="entry name" value="RimM_N_sf"/>
</dbReference>
<dbReference type="NCBIfam" id="TIGR02273">
    <property type="entry name" value="16S_RimM"/>
    <property type="match status" value="1"/>
</dbReference>
<dbReference type="NCBIfam" id="NF010403">
    <property type="entry name" value="PRK13829.1"/>
    <property type="match status" value="1"/>
</dbReference>
<dbReference type="PANTHER" id="PTHR33692">
    <property type="entry name" value="RIBOSOME MATURATION FACTOR RIMM"/>
    <property type="match status" value="1"/>
</dbReference>
<dbReference type="PANTHER" id="PTHR33692:SF1">
    <property type="entry name" value="RIBOSOME MATURATION FACTOR RIMM"/>
    <property type="match status" value="1"/>
</dbReference>
<dbReference type="Pfam" id="PF05239">
    <property type="entry name" value="PRC"/>
    <property type="match status" value="1"/>
</dbReference>
<dbReference type="Pfam" id="PF01782">
    <property type="entry name" value="RimM"/>
    <property type="match status" value="1"/>
</dbReference>
<dbReference type="SUPFAM" id="SSF50346">
    <property type="entry name" value="PRC-barrel domain"/>
    <property type="match status" value="1"/>
</dbReference>
<keyword id="KW-0143">Chaperone</keyword>
<keyword id="KW-0963">Cytoplasm</keyword>
<keyword id="KW-0690">Ribosome biogenesis</keyword>
<keyword id="KW-0698">rRNA processing</keyword>
<protein>
    <recommendedName>
        <fullName evidence="1">Ribosome maturation factor RimM</fullName>
    </recommendedName>
</protein>
<gene>
    <name evidence="1" type="primary">rimM</name>
    <name type="ordered locus">Dgeo_1485</name>
</gene>
<feature type="chain" id="PRO_0000321723" description="Ribosome maturation factor RimM">
    <location>
        <begin position="1"/>
        <end position="178"/>
    </location>
</feature>
<feature type="domain" description="PRC barrel" evidence="1">
    <location>
        <begin position="93"/>
        <end position="170"/>
    </location>
</feature>
<proteinExistence type="inferred from homology"/>
<name>RIMM_DEIGD</name>
<evidence type="ECO:0000255" key="1">
    <source>
        <dbReference type="HAMAP-Rule" id="MF_00014"/>
    </source>
</evidence>
<accession>Q1IYA4</accession>
<comment type="function">
    <text evidence="1">An accessory protein needed during the final step in the assembly of 30S ribosomal subunit, possibly for assembly of the head region. Essential for efficient processing of 16S rRNA. May be needed both before and after RbfA during the maturation of 16S rRNA. It has affinity for free ribosomal 30S subunits but not for 70S ribosomes.</text>
</comment>
<comment type="subunit">
    <text evidence="1">Binds ribosomal protein uS19.</text>
</comment>
<comment type="subcellular location">
    <subcellularLocation>
        <location evidence="1">Cytoplasm</location>
    </subcellularLocation>
</comment>
<comment type="domain">
    <text evidence="1">The PRC barrel domain binds ribosomal protein uS19.</text>
</comment>
<comment type="similarity">
    <text evidence="1">Belongs to the RimM family.</text>
</comment>
<sequence>MNAPADTTRLGYFLGPHGVQGGVKVYVLGDPQQLLALPRVWVEGQGWLRVRRTEALAPGAVLHLAGITSREAAEALRGLNVYAADADLPPLEEGSYYYHELRGLPVRDANGQPLGEVRDVWDSGHQDLLVVSHAGGEAFLPLQAPYVLVQTGESGRPQAIALTADAPAGLLGEGAEEA</sequence>
<reference key="1">
    <citation type="submission" date="2006-04" db="EMBL/GenBank/DDBJ databases">
        <title>Complete sequence of chromosome of Deinococcus geothermalis DSM 11300.</title>
        <authorList>
            <person name="Copeland A."/>
            <person name="Lucas S."/>
            <person name="Lapidus A."/>
            <person name="Barry K."/>
            <person name="Detter J.C."/>
            <person name="Glavina del Rio T."/>
            <person name="Hammon N."/>
            <person name="Israni S."/>
            <person name="Dalin E."/>
            <person name="Tice H."/>
            <person name="Pitluck S."/>
            <person name="Brettin T."/>
            <person name="Bruce D."/>
            <person name="Han C."/>
            <person name="Tapia R."/>
            <person name="Saunders E."/>
            <person name="Gilna P."/>
            <person name="Schmutz J."/>
            <person name="Larimer F."/>
            <person name="Land M."/>
            <person name="Hauser L."/>
            <person name="Kyrpides N."/>
            <person name="Kim E."/>
            <person name="Daly M.J."/>
            <person name="Fredrickson J.K."/>
            <person name="Makarova K.S."/>
            <person name="Gaidamakova E.K."/>
            <person name="Zhai M."/>
            <person name="Richardson P."/>
        </authorList>
    </citation>
    <scope>NUCLEOTIDE SEQUENCE [LARGE SCALE GENOMIC DNA]</scope>
    <source>
        <strain>DSM 11300 / CIP 105573 / AG-3a</strain>
    </source>
</reference>